<keyword id="KW-0488">Methylation</keyword>
<keyword id="KW-1185">Reference proteome</keyword>
<keyword id="KW-0687">Ribonucleoprotein</keyword>
<keyword id="KW-0689">Ribosomal protein</keyword>
<keyword id="KW-0694">RNA-binding</keyword>
<keyword id="KW-0699">rRNA-binding</keyword>
<proteinExistence type="inferred from homology"/>
<dbReference type="EMBL" id="CP000786">
    <property type="protein sequence ID" value="ABZ98078.1"/>
    <property type="molecule type" value="Genomic_DNA"/>
</dbReference>
<dbReference type="RefSeq" id="WP_012388949.1">
    <property type="nucleotide sequence ID" value="NC_010602.1"/>
</dbReference>
<dbReference type="SMR" id="B0SSI8"/>
<dbReference type="STRING" id="456481.LEPBI_I1976"/>
<dbReference type="KEGG" id="lbi:LEPBI_I1976"/>
<dbReference type="HOGENOM" id="CLU_074237_2_0_12"/>
<dbReference type="OrthoDB" id="9802408at2"/>
<dbReference type="BioCyc" id="LBIF456481:LEPBI_RS09760-MONOMER"/>
<dbReference type="Proteomes" id="UP000001847">
    <property type="component" value="Chromosome I"/>
</dbReference>
<dbReference type="GO" id="GO:0022625">
    <property type="term" value="C:cytosolic large ribosomal subunit"/>
    <property type="evidence" value="ECO:0007669"/>
    <property type="project" value="TreeGrafter"/>
</dbReference>
<dbReference type="GO" id="GO:0070180">
    <property type="term" value="F:large ribosomal subunit rRNA binding"/>
    <property type="evidence" value="ECO:0007669"/>
    <property type="project" value="UniProtKB-UniRule"/>
</dbReference>
<dbReference type="GO" id="GO:0003735">
    <property type="term" value="F:structural constituent of ribosome"/>
    <property type="evidence" value="ECO:0007669"/>
    <property type="project" value="InterPro"/>
</dbReference>
<dbReference type="GO" id="GO:0006412">
    <property type="term" value="P:translation"/>
    <property type="evidence" value="ECO:0007669"/>
    <property type="project" value="UniProtKB-UniRule"/>
</dbReference>
<dbReference type="CDD" id="cd00349">
    <property type="entry name" value="Ribosomal_L11"/>
    <property type="match status" value="1"/>
</dbReference>
<dbReference type="FunFam" id="1.10.10.250:FF:000001">
    <property type="entry name" value="50S ribosomal protein L11"/>
    <property type="match status" value="1"/>
</dbReference>
<dbReference type="FunFam" id="3.30.1550.10:FF:000001">
    <property type="entry name" value="50S ribosomal protein L11"/>
    <property type="match status" value="1"/>
</dbReference>
<dbReference type="Gene3D" id="1.10.10.250">
    <property type="entry name" value="Ribosomal protein L11, C-terminal domain"/>
    <property type="match status" value="1"/>
</dbReference>
<dbReference type="Gene3D" id="3.30.1550.10">
    <property type="entry name" value="Ribosomal protein L11/L12, N-terminal domain"/>
    <property type="match status" value="1"/>
</dbReference>
<dbReference type="HAMAP" id="MF_00736">
    <property type="entry name" value="Ribosomal_uL11"/>
    <property type="match status" value="1"/>
</dbReference>
<dbReference type="InterPro" id="IPR000911">
    <property type="entry name" value="Ribosomal_uL11"/>
</dbReference>
<dbReference type="InterPro" id="IPR006519">
    <property type="entry name" value="Ribosomal_uL11_bac-typ"/>
</dbReference>
<dbReference type="InterPro" id="IPR020783">
    <property type="entry name" value="Ribosomal_uL11_C"/>
</dbReference>
<dbReference type="InterPro" id="IPR036769">
    <property type="entry name" value="Ribosomal_uL11_C_sf"/>
</dbReference>
<dbReference type="InterPro" id="IPR020785">
    <property type="entry name" value="Ribosomal_uL11_CS"/>
</dbReference>
<dbReference type="InterPro" id="IPR020784">
    <property type="entry name" value="Ribosomal_uL11_N"/>
</dbReference>
<dbReference type="InterPro" id="IPR036796">
    <property type="entry name" value="Ribosomal_uL11_N_sf"/>
</dbReference>
<dbReference type="NCBIfam" id="TIGR01632">
    <property type="entry name" value="L11_bact"/>
    <property type="match status" value="1"/>
</dbReference>
<dbReference type="PANTHER" id="PTHR11661">
    <property type="entry name" value="60S RIBOSOMAL PROTEIN L12"/>
    <property type="match status" value="1"/>
</dbReference>
<dbReference type="PANTHER" id="PTHR11661:SF1">
    <property type="entry name" value="LARGE RIBOSOMAL SUBUNIT PROTEIN UL11M"/>
    <property type="match status" value="1"/>
</dbReference>
<dbReference type="Pfam" id="PF00298">
    <property type="entry name" value="Ribosomal_L11"/>
    <property type="match status" value="1"/>
</dbReference>
<dbReference type="Pfam" id="PF03946">
    <property type="entry name" value="Ribosomal_L11_N"/>
    <property type="match status" value="1"/>
</dbReference>
<dbReference type="SMART" id="SM00649">
    <property type="entry name" value="RL11"/>
    <property type="match status" value="1"/>
</dbReference>
<dbReference type="SUPFAM" id="SSF54747">
    <property type="entry name" value="Ribosomal L11/L12e N-terminal domain"/>
    <property type="match status" value="1"/>
</dbReference>
<dbReference type="SUPFAM" id="SSF46906">
    <property type="entry name" value="Ribosomal protein L11, C-terminal domain"/>
    <property type="match status" value="1"/>
</dbReference>
<dbReference type="PROSITE" id="PS00359">
    <property type="entry name" value="RIBOSOMAL_L11"/>
    <property type="match status" value="1"/>
</dbReference>
<reference key="1">
    <citation type="journal article" date="2008" name="PLoS ONE">
        <title>Genome sequence of the saprophyte Leptospira biflexa provides insights into the evolution of Leptospira and the pathogenesis of leptospirosis.</title>
        <authorList>
            <person name="Picardeau M."/>
            <person name="Bulach D.M."/>
            <person name="Bouchier C."/>
            <person name="Zuerner R.L."/>
            <person name="Zidane N."/>
            <person name="Wilson P.J."/>
            <person name="Creno S."/>
            <person name="Kuczek E.S."/>
            <person name="Bommezzadri S."/>
            <person name="Davis J.C."/>
            <person name="McGrath A."/>
            <person name="Johnson M.J."/>
            <person name="Boursaux-Eude C."/>
            <person name="Seemann T."/>
            <person name="Rouy Z."/>
            <person name="Coppel R.L."/>
            <person name="Rood J.I."/>
            <person name="Lajus A."/>
            <person name="Davies J.K."/>
            <person name="Medigue C."/>
            <person name="Adler B."/>
        </authorList>
    </citation>
    <scope>NUCLEOTIDE SEQUENCE [LARGE SCALE GENOMIC DNA]</scope>
    <source>
        <strain>Patoc 1 / ATCC 23582 / Paris</strain>
    </source>
</reference>
<name>RL11_LEPBP</name>
<sequence>MAAKKVVKQIKLQVEAGKANPAPPVGPALGQAGLNIMEFCKQFNERSKNQMGLKLPVVITVYSDRSFTFVTKSPPAALLVMKALGLQGGSATPHTVKVGTIKRAQLEEIAKTKMEDLNANDMDAAVKIIAGTCRSMGVNVE</sequence>
<comment type="function">
    <text evidence="1">Forms part of the ribosomal stalk which helps the ribosome interact with GTP-bound translation factors.</text>
</comment>
<comment type="subunit">
    <text evidence="1">Part of the ribosomal stalk of the 50S ribosomal subunit. Interacts with L10 and the large rRNA to form the base of the stalk. L10 forms an elongated spine to which L12 dimers bind in a sequential fashion forming a multimeric L10(L12)X complex.</text>
</comment>
<comment type="PTM">
    <text evidence="1">One or more lysine residues are methylated.</text>
</comment>
<comment type="similarity">
    <text evidence="1">Belongs to the universal ribosomal protein uL11 family.</text>
</comment>
<protein>
    <recommendedName>
        <fullName evidence="1">Large ribosomal subunit protein uL11</fullName>
    </recommendedName>
    <alternativeName>
        <fullName evidence="2">50S ribosomal protein L11</fullName>
    </alternativeName>
</protein>
<evidence type="ECO:0000255" key="1">
    <source>
        <dbReference type="HAMAP-Rule" id="MF_00736"/>
    </source>
</evidence>
<evidence type="ECO:0000305" key="2"/>
<accession>B0SSI8</accession>
<organism>
    <name type="scientific">Leptospira biflexa serovar Patoc (strain Patoc 1 / ATCC 23582 / Paris)</name>
    <dbReference type="NCBI Taxonomy" id="456481"/>
    <lineage>
        <taxon>Bacteria</taxon>
        <taxon>Pseudomonadati</taxon>
        <taxon>Spirochaetota</taxon>
        <taxon>Spirochaetia</taxon>
        <taxon>Leptospirales</taxon>
        <taxon>Leptospiraceae</taxon>
        <taxon>Leptospira</taxon>
    </lineage>
</organism>
<feature type="chain" id="PRO_1000195661" description="Large ribosomal subunit protein uL11">
    <location>
        <begin position="1"/>
        <end position="141"/>
    </location>
</feature>
<gene>
    <name evidence="1" type="primary">rplK</name>
    <name type="ordered locus">LEPBI_I1976</name>
</gene>